<accession>A6W4N5</accession>
<sequence>MKVRASLKSLKQKEGSIVVRRRGKTYVLNKRNPRWKARQG</sequence>
<comment type="similarity">
    <text evidence="1">Belongs to the bacterial ribosomal protein bL36 family.</text>
</comment>
<protein>
    <recommendedName>
        <fullName evidence="1">Large ribosomal subunit protein bL36A</fullName>
    </recommendedName>
    <alternativeName>
        <fullName evidence="2">50S ribosomal protein L36 1</fullName>
    </alternativeName>
</protein>
<keyword id="KW-1185">Reference proteome</keyword>
<keyword id="KW-0687">Ribonucleoprotein</keyword>
<keyword id="KW-0689">Ribosomal protein</keyword>
<dbReference type="EMBL" id="CP000750">
    <property type="protein sequence ID" value="ABS01774.1"/>
    <property type="molecule type" value="Genomic_DNA"/>
</dbReference>
<dbReference type="RefSeq" id="WP_012085403.1">
    <property type="nucleotide sequence ID" value="NC_009664.2"/>
</dbReference>
<dbReference type="SMR" id="A6W4N5"/>
<dbReference type="STRING" id="266940.Krad_0284"/>
<dbReference type="KEGG" id="kra:Krad_0284"/>
<dbReference type="eggNOG" id="COG0257">
    <property type="taxonomic scope" value="Bacteria"/>
</dbReference>
<dbReference type="HOGENOM" id="CLU_135723_3_1_11"/>
<dbReference type="OrthoDB" id="9801558at2"/>
<dbReference type="Proteomes" id="UP000001116">
    <property type="component" value="Chromosome"/>
</dbReference>
<dbReference type="GO" id="GO:1990904">
    <property type="term" value="C:ribonucleoprotein complex"/>
    <property type="evidence" value="ECO:0007669"/>
    <property type="project" value="UniProtKB-KW"/>
</dbReference>
<dbReference type="GO" id="GO:0005840">
    <property type="term" value="C:ribosome"/>
    <property type="evidence" value="ECO:0007669"/>
    <property type="project" value="UniProtKB-KW"/>
</dbReference>
<dbReference type="GO" id="GO:0003735">
    <property type="term" value="F:structural constituent of ribosome"/>
    <property type="evidence" value="ECO:0007669"/>
    <property type="project" value="InterPro"/>
</dbReference>
<dbReference type="GO" id="GO:0006412">
    <property type="term" value="P:translation"/>
    <property type="evidence" value="ECO:0007669"/>
    <property type="project" value="UniProtKB-UniRule"/>
</dbReference>
<dbReference type="HAMAP" id="MF_00251">
    <property type="entry name" value="Ribosomal_bL36"/>
    <property type="match status" value="1"/>
</dbReference>
<dbReference type="InterPro" id="IPR000473">
    <property type="entry name" value="Ribosomal_bL36"/>
</dbReference>
<dbReference type="InterPro" id="IPR035977">
    <property type="entry name" value="Ribosomal_bL36_sp"/>
</dbReference>
<dbReference type="InterPro" id="IPR047621">
    <property type="entry name" value="Ribosomal_L36_bact"/>
</dbReference>
<dbReference type="NCBIfam" id="NF002021">
    <property type="entry name" value="PRK00831.1"/>
    <property type="match status" value="1"/>
</dbReference>
<dbReference type="PANTHER" id="PTHR47781">
    <property type="entry name" value="50S RIBOSOMAL PROTEIN L36 2"/>
    <property type="match status" value="1"/>
</dbReference>
<dbReference type="PANTHER" id="PTHR47781:SF1">
    <property type="entry name" value="LARGE RIBOSOMAL SUBUNIT PROTEIN BL36B"/>
    <property type="match status" value="1"/>
</dbReference>
<dbReference type="Pfam" id="PF00444">
    <property type="entry name" value="Ribosomal_L36"/>
    <property type="match status" value="1"/>
</dbReference>
<dbReference type="SUPFAM" id="SSF57840">
    <property type="entry name" value="Ribosomal protein L36"/>
    <property type="match status" value="1"/>
</dbReference>
<proteinExistence type="inferred from homology"/>
<gene>
    <name evidence="1" type="primary">rpmJ1</name>
    <name type="ordered locus">Krad_0284</name>
</gene>
<evidence type="ECO:0000255" key="1">
    <source>
        <dbReference type="HAMAP-Rule" id="MF_00251"/>
    </source>
</evidence>
<evidence type="ECO:0000305" key="2"/>
<organism>
    <name type="scientific">Kineococcus radiotolerans (strain ATCC BAA-149 / DSM 14245 / SRS30216)</name>
    <dbReference type="NCBI Taxonomy" id="266940"/>
    <lineage>
        <taxon>Bacteria</taxon>
        <taxon>Bacillati</taxon>
        <taxon>Actinomycetota</taxon>
        <taxon>Actinomycetes</taxon>
        <taxon>Kineosporiales</taxon>
        <taxon>Kineosporiaceae</taxon>
        <taxon>Kineococcus</taxon>
    </lineage>
</organism>
<name>RL361_KINRD</name>
<feature type="chain" id="PRO_0000344684" description="Large ribosomal subunit protein bL36A">
    <location>
        <begin position="1"/>
        <end position="40"/>
    </location>
</feature>
<reference key="1">
    <citation type="journal article" date="2008" name="PLoS ONE">
        <title>Survival in nuclear waste, extreme resistance, and potential applications gleaned from the genome sequence of Kineococcus radiotolerans SRS30216.</title>
        <authorList>
            <person name="Bagwell C.E."/>
            <person name="Bhat S."/>
            <person name="Hawkins G.M."/>
            <person name="Smith B.W."/>
            <person name="Biswas T."/>
            <person name="Hoover T.R."/>
            <person name="Saunders E."/>
            <person name="Han C.S."/>
            <person name="Tsodikov O.V."/>
            <person name="Shimkets L.J."/>
        </authorList>
    </citation>
    <scope>NUCLEOTIDE SEQUENCE [LARGE SCALE GENOMIC DNA]</scope>
    <source>
        <strain>ATCC BAA-149 / DSM 14245 / SRS30216</strain>
    </source>
</reference>